<sequence length="817" mass="94269">MVAIENKEVLFGGSLKSTEEYDQFFCPSIDIPKFLFKYWDSKPLGKNVSSDQFAETAIQMLEYFIQNNYTGPYLPIKPEIWLPQRLRDEATLKDAIIKSLTVEGERPYRLAPKLLFLLLSQTLFNYANSKDPLHIWYKARLDFLHQQMLKEHVSELFNQIMEGMHIVSSHVSSLDRDLQGRFTMEMGLIQSYYGRDTLALQLMKESAKVMDFHFELTGALGRRTKFQTFDTSQLVVLAKSRDRCKDTEQNKSTSTQPITFELNDDTLLEKISFKEDQKSLAPSEELDPILSSEDPNHPSKLDPLDASLLLAFCHIIKNNNPDDGLTREEMAPYAERVLVYPVNWSVYTMALLVRARLEGFKSRTVERSVLQMQALLDQLNDQLSFGKSPEGVDKPENDEGLGSFLPKPQDGENSASLKERLNYFYNLLMPSRWQLEAELAERFISVGATKSALEIFERLQMWDCVVMCHCSLNRQDLAVQVIKRELENDPYDFLLRTLLGDIENNPKHYVEAWELSCKRFAPAQRSLGKYYYKKGDLLQAMNCFNESLKINPLSYPTWFTYGCAALELQKYDAAMEAFSRCLSINPEDGESWNNLASAMLKAKDHTKEQAWHAMQQGIKYMYDNWRIWENYMLISVDVNKWSEVIRALRRIIEIKGKDEGERAVDVQCLDLVVNYVMQSCDNDASGLARMLNELLKMVVPLITNDVRLWRIVARYYLWRRHFAESLNATLKAYRILISSPNVTSDEATWNKTVEGALELVEAYANLGEMPGRMGGVVAKDWKFKSRSVLRSLIGKGKNIWENTESYQKLESELENLK</sequence>
<accession>O36033</accession>
<accession>Q9P379</accession>
<gene>
    <name type="ORF">SPAC19B12.01</name>
    <name type="ORF">SPAC4F10.21</name>
</gene>
<reference key="1">
    <citation type="journal article" date="2002" name="Nature">
        <title>The genome sequence of Schizosaccharomyces pombe.</title>
        <authorList>
            <person name="Wood V."/>
            <person name="Gwilliam R."/>
            <person name="Rajandream M.A."/>
            <person name="Lyne M.H."/>
            <person name="Lyne R."/>
            <person name="Stewart A."/>
            <person name="Sgouros J.G."/>
            <person name="Peat N."/>
            <person name="Hayles J."/>
            <person name="Baker S.G."/>
            <person name="Basham D."/>
            <person name="Bowman S."/>
            <person name="Brooks K."/>
            <person name="Brown D."/>
            <person name="Brown S."/>
            <person name="Chillingworth T."/>
            <person name="Churcher C.M."/>
            <person name="Collins M."/>
            <person name="Connor R."/>
            <person name="Cronin A."/>
            <person name="Davis P."/>
            <person name="Feltwell T."/>
            <person name="Fraser A."/>
            <person name="Gentles S."/>
            <person name="Goble A."/>
            <person name="Hamlin N."/>
            <person name="Harris D.E."/>
            <person name="Hidalgo J."/>
            <person name="Hodgson G."/>
            <person name="Holroyd S."/>
            <person name="Hornsby T."/>
            <person name="Howarth S."/>
            <person name="Huckle E.J."/>
            <person name="Hunt S."/>
            <person name="Jagels K."/>
            <person name="James K.D."/>
            <person name="Jones L."/>
            <person name="Jones M."/>
            <person name="Leather S."/>
            <person name="McDonald S."/>
            <person name="McLean J."/>
            <person name="Mooney P."/>
            <person name="Moule S."/>
            <person name="Mungall K.L."/>
            <person name="Murphy L.D."/>
            <person name="Niblett D."/>
            <person name="Odell C."/>
            <person name="Oliver K."/>
            <person name="O'Neil S."/>
            <person name="Pearson D."/>
            <person name="Quail M.A."/>
            <person name="Rabbinowitsch E."/>
            <person name="Rutherford K.M."/>
            <person name="Rutter S."/>
            <person name="Saunders D."/>
            <person name="Seeger K."/>
            <person name="Sharp S."/>
            <person name="Skelton J."/>
            <person name="Simmonds M.N."/>
            <person name="Squares R."/>
            <person name="Squares S."/>
            <person name="Stevens K."/>
            <person name="Taylor K."/>
            <person name="Taylor R.G."/>
            <person name="Tivey A."/>
            <person name="Walsh S.V."/>
            <person name="Warren T."/>
            <person name="Whitehead S."/>
            <person name="Woodward J.R."/>
            <person name="Volckaert G."/>
            <person name="Aert R."/>
            <person name="Robben J."/>
            <person name="Grymonprez B."/>
            <person name="Weltjens I."/>
            <person name="Vanstreels E."/>
            <person name="Rieger M."/>
            <person name="Schaefer M."/>
            <person name="Mueller-Auer S."/>
            <person name="Gabel C."/>
            <person name="Fuchs M."/>
            <person name="Duesterhoeft A."/>
            <person name="Fritzc C."/>
            <person name="Holzer E."/>
            <person name="Moestl D."/>
            <person name="Hilbert H."/>
            <person name="Borzym K."/>
            <person name="Langer I."/>
            <person name="Beck A."/>
            <person name="Lehrach H."/>
            <person name="Reinhardt R."/>
            <person name="Pohl T.M."/>
            <person name="Eger P."/>
            <person name="Zimmermann W."/>
            <person name="Wedler H."/>
            <person name="Wambutt R."/>
            <person name="Purnelle B."/>
            <person name="Goffeau A."/>
            <person name="Cadieu E."/>
            <person name="Dreano S."/>
            <person name="Gloux S."/>
            <person name="Lelaure V."/>
            <person name="Mottier S."/>
            <person name="Galibert F."/>
            <person name="Aves S.J."/>
            <person name="Xiang Z."/>
            <person name="Hunt C."/>
            <person name="Moore K."/>
            <person name="Hurst S.M."/>
            <person name="Lucas M."/>
            <person name="Rochet M."/>
            <person name="Gaillardin C."/>
            <person name="Tallada V.A."/>
            <person name="Garzon A."/>
            <person name="Thode G."/>
            <person name="Daga R.R."/>
            <person name="Cruzado L."/>
            <person name="Jimenez J."/>
            <person name="Sanchez M."/>
            <person name="del Rey F."/>
            <person name="Benito J."/>
            <person name="Dominguez A."/>
            <person name="Revuelta J.L."/>
            <person name="Moreno S."/>
            <person name="Armstrong J."/>
            <person name="Forsburg S.L."/>
            <person name="Cerutti L."/>
            <person name="Lowe T."/>
            <person name="McCombie W.R."/>
            <person name="Paulsen I."/>
            <person name="Potashkin J."/>
            <person name="Shpakovski G.V."/>
            <person name="Ussery D."/>
            <person name="Barrell B.G."/>
            <person name="Nurse P."/>
        </authorList>
    </citation>
    <scope>NUCLEOTIDE SEQUENCE [LARGE SCALE GENOMIC DNA]</scope>
    <source>
        <strain>972 / ATCC 24843</strain>
    </source>
</reference>
<name>YLM1_SCHPO</name>
<feature type="chain" id="PRO_0000106417" description="TPR repeat-containing protein C19B12.01">
    <location>
        <begin position="1"/>
        <end position="817"/>
    </location>
</feature>
<feature type="repeat" description="TPR 1">
    <location>
        <begin position="459"/>
        <end position="492"/>
    </location>
</feature>
<feature type="repeat" description="TPR 2">
    <location>
        <begin position="521"/>
        <end position="554"/>
    </location>
</feature>
<feature type="repeat" description="TPR 3">
    <location>
        <begin position="555"/>
        <end position="588"/>
    </location>
</feature>
<feature type="repeat" description="TPR 4">
    <location>
        <begin position="625"/>
        <end position="658"/>
    </location>
</feature>
<feature type="region of interest" description="Disordered" evidence="1">
    <location>
        <begin position="276"/>
        <end position="298"/>
    </location>
</feature>
<feature type="region of interest" description="Disordered" evidence="1">
    <location>
        <begin position="386"/>
        <end position="413"/>
    </location>
</feature>
<protein>
    <recommendedName>
        <fullName>TPR repeat-containing protein C19B12.01</fullName>
    </recommendedName>
</protein>
<evidence type="ECO:0000256" key="1">
    <source>
        <dbReference type="SAM" id="MobiDB-lite"/>
    </source>
</evidence>
<keyword id="KW-1185">Reference proteome</keyword>
<keyword id="KW-0677">Repeat</keyword>
<keyword id="KW-0802">TPR repeat</keyword>
<proteinExistence type="predicted"/>
<organism>
    <name type="scientific">Schizosaccharomyces pombe (strain 972 / ATCC 24843)</name>
    <name type="common">Fission yeast</name>
    <dbReference type="NCBI Taxonomy" id="284812"/>
    <lineage>
        <taxon>Eukaryota</taxon>
        <taxon>Fungi</taxon>
        <taxon>Dikarya</taxon>
        <taxon>Ascomycota</taxon>
        <taxon>Taphrinomycotina</taxon>
        <taxon>Schizosaccharomycetes</taxon>
        <taxon>Schizosaccharomycetales</taxon>
        <taxon>Schizosaccharomycetaceae</taxon>
        <taxon>Schizosaccharomyces</taxon>
    </lineage>
</organism>
<dbReference type="EMBL" id="CU329670">
    <property type="protein sequence ID" value="CAB11723.2"/>
    <property type="molecule type" value="Genomic_DNA"/>
</dbReference>
<dbReference type="RefSeq" id="NP_594764.2">
    <property type="nucleotide sequence ID" value="NM_001020191.2"/>
</dbReference>
<dbReference type="SMR" id="O36033"/>
<dbReference type="BioGRID" id="280006">
    <property type="interactions" value="2"/>
</dbReference>
<dbReference type="FunCoup" id="O36033">
    <property type="interactions" value="986"/>
</dbReference>
<dbReference type="STRING" id="284812.O36033"/>
<dbReference type="iPTMnet" id="O36033"/>
<dbReference type="PaxDb" id="4896-SPAC19B12.01.1"/>
<dbReference type="EnsemblFungi" id="SPAC19B12.01.1">
    <property type="protein sequence ID" value="SPAC19B12.01.1:pep"/>
    <property type="gene ID" value="SPAC19B12.01"/>
</dbReference>
<dbReference type="GeneID" id="2543591"/>
<dbReference type="KEGG" id="spo:2543591"/>
<dbReference type="PomBase" id="SPAC19B12.01"/>
<dbReference type="VEuPathDB" id="FungiDB:SPAC19B12.01"/>
<dbReference type="eggNOG" id="KOG1128">
    <property type="taxonomic scope" value="Eukaryota"/>
</dbReference>
<dbReference type="HOGENOM" id="CLU_004905_0_1_1"/>
<dbReference type="InParanoid" id="O36033"/>
<dbReference type="OMA" id="WNIRLIC"/>
<dbReference type="PhylomeDB" id="O36033"/>
<dbReference type="PRO" id="PR:O36033"/>
<dbReference type="Proteomes" id="UP000002485">
    <property type="component" value="Chromosome I"/>
</dbReference>
<dbReference type="GO" id="GO:0005829">
    <property type="term" value="C:cytosol"/>
    <property type="evidence" value="ECO:0007005"/>
    <property type="project" value="PomBase"/>
</dbReference>
<dbReference type="GO" id="GO:0005634">
    <property type="term" value="C:nucleus"/>
    <property type="evidence" value="ECO:0007005"/>
    <property type="project" value="PomBase"/>
</dbReference>
<dbReference type="FunFam" id="1.25.40.10:FF:000884">
    <property type="entry name" value="TPR repeat-containing protein C19B12.01"/>
    <property type="match status" value="1"/>
</dbReference>
<dbReference type="Gene3D" id="1.25.40.10">
    <property type="entry name" value="Tetratricopeptide repeat domain"/>
    <property type="match status" value="1"/>
</dbReference>
<dbReference type="InterPro" id="IPR011990">
    <property type="entry name" value="TPR-like_helical_dom_sf"/>
</dbReference>
<dbReference type="InterPro" id="IPR019734">
    <property type="entry name" value="TPR_rpt"/>
</dbReference>
<dbReference type="InterPro" id="IPR044244">
    <property type="entry name" value="TTC27/Emw1"/>
</dbReference>
<dbReference type="PANTHER" id="PTHR16193">
    <property type="entry name" value="TETRATRICOPEPTIDE REPEAT PROTEIN 27"/>
    <property type="match status" value="1"/>
</dbReference>
<dbReference type="PANTHER" id="PTHR16193:SF0">
    <property type="entry name" value="TETRATRICOPEPTIDE REPEAT PROTEIN 27"/>
    <property type="match status" value="1"/>
</dbReference>
<dbReference type="Pfam" id="PF13181">
    <property type="entry name" value="TPR_8"/>
    <property type="match status" value="2"/>
</dbReference>
<dbReference type="SMART" id="SM00028">
    <property type="entry name" value="TPR"/>
    <property type="match status" value="2"/>
</dbReference>
<dbReference type="SUPFAM" id="SSF48452">
    <property type="entry name" value="TPR-like"/>
    <property type="match status" value="1"/>
</dbReference>
<dbReference type="PROSITE" id="PS50005">
    <property type="entry name" value="TPR"/>
    <property type="match status" value="3"/>
</dbReference>
<dbReference type="PROSITE" id="PS50293">
    <property type="entry name" value="TPR_REGION"/>
    <property type="match status" value="1"/>
</dbReference>